<protein>
    <recommendedName>
        <fullName evidence="1">Energy-coupling factor transporter ATP-binding protein EcfA1</fullName>
        <shortName evidence="1">ECF transporter A component EcfA1</shortName>
        <ecNumber evidence="1">7.-.-.-</ecNumber>
    </recommendedName>
</protein>
<sequence>MNGSNPIIEFKDVSFQYQSDAAFTLNRVSFSIPAGQWTSIVGHNGSGKSTIAKLMVGIEEPSEGQILFQNLPVDSQNKREVRKHIGIVFQNPDNQFVGSIVKFDVAFGLENQLVPYKEMVSKVNQVLTEVDMINKADDEPHSLSGGQKQRVAIAGVLALNPDVLILDEATTMLDPHGKSSLLNLVNEVKVNNHVTIISITHDLDEAMHADQIIVLNKGTVFKQGTPQDIFKCEEALISVGLDLPFPLKMNRLLGFDSTYVTYEGLIKKL</sequence>
<reference key="1">
    <citation type="journal article" date="2005" name="J. Bacteriol.">
        <title>Insights on evolution of virulence and resistance from the complete genome analysis of an early methicillin-resistant Staphylococcus aureus strain and a biofilm-producing methicillin-resistant Staphylococcus epidermidis strain.</title>
        <authorList>
            <person name="Gill S.R."/>
            <person name="Fouts D.E."/>
            <person name="Archer G.L."/>
            <person name="Mongodin E.F."/>
            <person name="DeBoy R.T."/>
            <person name="Ravel J."/>
            <person name="Paulsen I.T."/>
            <person name="Kolonay J.F."/>
            <person name="Brinkac L.M."/>
            <person name="Beanan M.J."/>
            <person name="Dodson R.J."/>
            <person name="Daugherty S.C."/>
            <person name="Madupu R."/>
            <person name="Angiuoli S.V."/>
            <person name="Durkin A.S."/>
            <person name="Haft D.H."/>
            <person name="Vamathevan J.J."/>
            <person name="Khouri H."/>
            <person name="Utterback T.R."/>
            <person name="Lee C."/>
            <person name="Dimitrov G."/>
            <person name="Jiang L."/>
            <person name="Qin H."/>
            <person name="Weidman J."/>
            <person name="Tran K."/>
            <person name="Kang K.H."/>
            <person name="Hance I.R."/>
            <person name="Nelson K.E."/>
            <person name="Fraser C.M."/>
        </authorList>
    </citation>
    <scope>NUCLEOTIDE SEQUENCE [LARGE SCALE GENOMIC DNA]</scope>
    <source>
        <strain>ATCC 35984 / DSM 28319 / BCRC 17069 / CCUG 31568 / BM 3577 / RP62A</strain>
    </source>
</reference>
<evidence type="ECO:0000255" key="1">
    <source>
        <dbReference type="HAMAP-Rule" id="MF_01710"/>
    </source>
</evidence>
<dbReference type="EC" id="7.-.-.-" evidence="1"/>
<dbReference type="EMBL" id="CP000029">
    <property type="protein sequence ID" value="AAW55196.1"/>
    <property type="molecule type" value="Genomic_DNA"/>
</dbReference>
<dbReference type="RefSeq" id="WP_002469356.1">
    <property type="nucleotide sequence ID" value="NC_002976.3"/>
</dbReference>
<dbReference type="SMR" id="Q5HM27"/>
<dbReference type="STRING" id="176279.SERP1803"/>
<dbReference type="KEGG" id="ser:SERP1803"/>
<dbReference type="eggNOG" id="COG1122">
    <property type="taxonomic scope" value="Bacteria"/>
</dbReference>
<dbReference type="HOGENOM" id="CLU_000604_1_22_9"/>
<dbReference type="Proteomes" id="UP000000531">
    <property type="component" value="Chromosome"/>
</dbReference>
<dbReference type="GO" id="GO:0043190">
    <property type="term" value="C:ATP-binding cassette (ABC) transporter complex"/>
    <property type="evidence" value="ECO:0007669"/>
    <property type="project" value="TreeGrafter"/>
</dbReference>
<dbReference type="GO" id="GO:0005524">
    <property type="term" value="F:ATP binding"/>
    <property type="evidence" value="ECO:0007669"/>
    <property type="project" value="UniProtKB-KW"/>
</dbReference>
<dbReference type="GO" id="GO:0016887">
    <property type="term" value="F:ATP hydrolysis activity"/>
    <property type="evidence" value="ECO:0007669"/>
    <property type="project" value="InterPro"/>
</dbReference>
<dbReference type="GO" id="GO:0042626">
    <property type="term" value="F:ATPase-coupled transmembrane transporter activity"/>
    <property type="evidence" value="ECO:0007669"/>
    <property type="project" value="TreeGrafter"/>
</dbReference>
<dbReference type="CDD" id="cd03225">
    <property type="entry name" value="ABC_cobalt_CbiO_domain1"/>
    <property type="match status" value="1"/>
</dbReference>
<dbReference type="FunFam" id="3.40.50.300:FF:000224">
    <property type="entry name" value="Energy-coupling factor transporter ATP-binding protein EcfA"/>
    <property type="match status" value="1"/>
</dbReference>
<dbReference type="Gene3D" id="3.40.50.300">
    <property type="entry name" value="P-loop containing nucleotide triphosphate hydrolases"/>
    <property type="match status" value="1"/>
</dbReference>
<dbReference type="InterPro" id="IPR003593">
    <property type="entry name" value="AAA+_ATPase"/>
</dbReference>
<dbReference type="InterPro" id="IPR003439">
    <property type="entry name" value="ABC_transporter-like_ATP-bd"/>
</dbReference>
<dbReference type="InterPro" id="IPR017871">
    <property type="entry name" value="ABC_transporter-like_CS"/>
</dbReference>
<dbReference type="InterPro" id="IPR015856">
    <property type="entry name" value="ABC_transpr_CbiO/EcfA_su"/>
</dbReference>
<dbReference type="InterPro" id="IPR050095">
    <property type="entry name" value="ECF_ABC_transporter_ATP-bd"/>
</dbReference>
<dbReference type="InterPro" id="IPR030947">
    <property type="entry name" value="EcfA_1"/>
</dbReference>
<dbReference type="InterPro" id="IPR027417">
    <property type="entry name" value="P-loop_NTPase"/>
</dbReference>
<dbReference type="NCBIfam" id="TIGR04520">
    <property type="entry name" value="ECF_ATPase_1"/>
    <property type="match status" value="1"/>
</dbReference>
<dbReference type="NCBIfam" id="NF010167">
    <property type="entry name" value="PRK13648.1"/>
    <property type="match status" value="1"/>
</dbReference>
<dbReference type="PANTHER" id="PTHR43553:SF24">
    <property type="entry name" value="ENERGY-COUPLING FACTOR TRANSPORTER ATP-BINDING PROTEIN ECFA1"/>
    <property type="match status" value="1"/>
</dbReference>
<dbReference type="PANTHER" id="PTHR43553">
    <property type="entry name" value="HEAVY METAL TRANSPORTER"/>
    <property type="match status" value="1"/>
</dbReference>
<dbReference type="Pfam" id="PF00005">
    <property type="entry name" value="ABC_tran"/>
    <property type="match status" value="1"/>
</dbReference>
<dbReference type="SMART" id="SM00382">
    <property type="entry name" value="AAA"/>
    <property type="match status" value="1"/>
</dbReference>
<dbReference type="SUPFAM" id="SSF52540">
    <property type="entry name" value="P-loop containing nucleoside triphosphate hydrolases"/>
    <property type="match status" value="1"/>
</dbReference>
<dbReference type="PROSITE" id="PS00211">
    <property type="entry name" value="ABC_TRANSPORTER_1"/>
    <property type="match status" value="1"/>
</dbReference>
<dbReference type="PROSITE" id="PS50893">
    <property type="entry name" value="ABC_TRANSPORTER_2"/>
    <property type="match status" value="1"/>
</dbReference>
<dbReference type="PROSITE" id="PS51246">
    <property type="entry name" value="CBIO"/>
    <property type="match status" value="1"/>
</dbReference>
<gene>
    <name evidence="1" type="primary">ecfA1</name>
    <name type="synonym">cbiO1</name>
    <name type="ordered locus">SERP1803</name>
</gene>
<accession>Q5HM27</accession>
<comment type="function">
    <text evidence="1">ATP-binding (A) component of a common energy-coupling factor (ECF) ABC-transporter complex. Unlike classic ABC transporters this ECF transporter provides the energy necessary to transport a number of different substrates.</text>
</comment>
<comment type="subunit">
    <text evidence="1">Forms a stable energy-coupling factor (ECF) transporter complex composed of 2 membrane-embedded substrate-binding proteins (S component), 2 ATP-binding proteins (A component) and 2 transmembrane proteins (T component).</text>
</comment>
<comment type="subcellular location">
    <subcellularLocation>
        <location evidence="1">Cell membrane</location>
        <topology evidence="1">Peripheral membrane protein</topology>
    </subcellularLocation>
</comment>
<comment type="similarity">
    <text evidence="1">Belongs to the ABC transporter superfamily. Energy-coupling factor EcfA family.</text>
</comment>
<feature type="chain" id="PRO_0000092083" description="Energy-coupling factor transporter ATP-binding protein EcfA1">
    <location>
        <begin position="1"/>
        <end position="269"/>
    </location>
</feature>
<feature type="domain" description="ABC transporter" evidence="1">
    <location>
        <begin position="8"/>
        <end position="242"/>
    </location>
</feature>
<feature type="binding site" evidence="1">
    <location>
        <begin position="42"/>
        <end position="49"/>
    </location>
    <ligand>
        <name>ATP</name>
        <dbReference type="ChEBI" id="CHEBI:30616"/>
    </ligand>
</feature>
<proteinExistence type="inferred from homology"/>
<name>ECFA1_STAEQ</name>
<keyword id="KW-0067">ATP-binding</keyword>
<keyword id="KW-1003">Cell membrane</keyword>
<keyword id="KW-0472">Membrane</keyword>
<keyword id="KW-0547">Nucleotide-binding</keyword>
<keyword id="KW-1185">Reference proteome</keyword>
<keyword id="KW-1278">Translocase</keyword>
<keyword id="KW-0813">Transport</keyword>
<organism>
    <name type="scientific">Staphylococcus epidermidis (strain ATCC 35984 / DSM 28319 / BCRC 17069 / CCUG 31568 / BM 3577 / RP62A)</name>
    <dbReference type="NCBI Taxonomy" id="176279"/>
    <lineage>
        <taxon>Bacteria</taxon>
        <taxon>Bacillati</taxon>
        <taxon>Bacillota</taxon>
        <taxon>Bacilli</taxon>
        <taxon>Bacillales</taxon>
        <taxon>Staphylococcaceae</taxon>
        <taxon>Staphylococcus</taxon>
    </lineage>
</organism>